<sequence>MLTTSDFKRGLVIKLDNSPCLILDVHFQSPSARGASTMVKTRYRNLLTGQVLDKTFRSGDKVEEADFERHKGQYLYADGDRGVFMDMETYEQFEMDAESFQVIQPYLLDGTEVVLGLFQERLVSVDPPQVVELTITDTPPVIKNATATAQTKEATLETGLTLQVPPYLEVGEKIKVDTRDCRFISRA</sequence>
<comment type="function">
    <text evidence="1">Involved in peptide bond synthesis. Stimulates efficient translation and peptide-bond synthesis on native or reconstituted 70S ribosomes in vitro. Probably functions indirectly by altering the affinity of the ribosome for aminoacyl-tRNA, thus increasing their reactivity as acceptors for peptidyl transferase.</text>
</comment>
<comment type="pathway">
    <text evidence="1">Protein biosynthesis; polypeptide chain elongation.</text>
</comment>
<comment type="subcellular location">
    <subcellularLocation>
        <location evidence="1">Cytoplasm</location>
    </subcellularLocation>
</comment>
<comment type="similarity">
    <text evidence="1">Belongs to the elongation factor P family.</text>
</comment>
<dbReference type="EMBL" id="AE017180">
    <property type="protein sequence ID" value="AAR33797.1"/>
    <property type="molecule type" value="Genomic_DNA"/>
</dbReference>
<dbReference type="RefSeq" id="NP_951524.1">
    <property type="nucleotide sequence ID" value="NC_002939.5"/>
</dbReference>
<dbReference type="RefSeq" id="WP_010941133.1">
    <property type="nucleotide sequence ID" value="NC_002939.5"/>
</dbReference>
<dbReference type="SMR" id="Q74FY7"/>
<dbReference type="STRING" id="243231.GSU0465"/>
<dbReference type="EnsemblBacteria" id="AAR33797">
    <property type="protein sequence ID" value="AAR33797"/>
    <property type="gene ID" value="GSU0465"/>
</dbReference>
<dbReference type="KEGG" id="gsu:GSU0465"/>
<dbReference type="PATRIC" id="fig|243231.5.peg.463"/>
<dbReference type="eggNOG" id="COG0231">
    <property type="taxonomic scope" value="Bacteria"/>
</dbReference>
<dbReference type="HOGENOM" id="CLU_074944_0_1_7"/>
<dbReference type="InParanoid" id="Q74FY7"/>
<dbReference type="OrthoDB" id="9801844at2"/>
<dbReference type="UniPathway" id="UPA00345"/>
<dbReference type="Proteomes" id="UP000000577">
    <property type="component" value="Chromosome"/>
</dbReference>
<dbReference type="GO" id="GO:0005737">
    <property type="term" value="C:cytoplasm"/>
    <property type="evidence" value="ECO:0000318"/>
    <property type="project" value="GO_Central"/>
</dbReference>
<dbReference type="GO" id="GO:0003746">
    <property type="term" value="F:translation elongation factor activity"/>
    <property type="evidence" value="ECO:0000318"/>
    <property type="project" value="GO_Central"/>
</dbReference>
<dbReference type="GO" id="GO:0043043">
    <property type="term" value="P:peptide biosynthetic process"/>
    <property type="evidence" value="ECO:0007669"/>
    <property type="project" value="InterPro"/>
</dbReference>
<dbReference type="CDD" id="cd04470">
    <property type="entry name" value="S1_EF-P_repeat_1"/>
    <property type="match status" value="1"/>
</dbReference>
<dbReference type="CDD" id="cd05794">
    <property type="entry name" value="S1_EF-P_repeat_2"/>
    <property type="match status" value="1"/>
</dbReference>
<dbReference type="FunFam" id="2.30.30.30:FF:000003">
    <property type="entry name" value="Elongation factor P"/>
    <property type="match status" value="1"/>
</dbReference>
<dbReference type="FunFam" id="2.40.50.140:FF:000004">
    <property type="entry name" value="Elongation factor P"/>
    <property type="match status" value="1"/>
</dbReference>
<dbReference type="FunFam" id="2.40.50.140:FF:000009">
    <property type="entry name" value="Elongation factor P"/>
    <property type="match status" value="1"/>
</dbReference>
<dbReference type="Gene3D" id="2.30.30.30">
    <property type="match status" value="1"/>
</dbReference>
<dbReference type="Gene3D" id="2.40.50.140">
    <property type="entry name" value="Nucleic acid-binding proteins"/>
    <property type="match status" value="2"/>
</dbReference>
<dbReference type="HAMAP" id="MF_00141">
    <property type="entry name" value="EF_P"/>
    <property type="match status" value="1"/>
</dbReference>
<dbReference type="InterPro" id="IPR015365">
    <property type="entry name" value="Elong-fact-P_C"/>
</dbReference>
<dbReference type="InterPro" id="IPR012340">
    <property type="entry name" value="NA-bd_OB-fold"/>
</dbReference>
<dbReference type="InterPro" id="IPR014722">
    <property type="entry name" value="Rib_uL2_dom2"/>
</dbReference>
<dbReference type="InterPro" id="IPR020599">
    <property type="entry name" value="Transl_elong_fac_P/YeiP"/>
</dbReference>
<dbReference type="InterPro" id="IPR013185">
    <property type="entry name" value="Transl_elong_KOW-like"/>
</dbReference>
<dbReference type="InterPro" id="IPR001059">
    <property type="entry name" value="Transl_elong_P/YeiP_cen"/>
</dbReference>
<dbReference type="InterPro" id="IPR013852">
    <property type="entry name" value="Transl_elong_P/YeiP_CS"/>
</dbReference>
<dbReference type="InterPro" id="IPR011768">
    <property type="entry name" value="Transl_elongation_fac_P"/>
</dbReference>
<dbReference type="InterPro" id="IPR008991">
    <property type="entry name" value="Translation_prot_SH3-like_sf"/>
</dbReference>
<dbReference type="NCBIfam" id="TIGR00038">
    <property type="entry name" value="efp"/>
    <property type="match status" value="1"/>
</dbReference>
<dbReference type="NCBIfam" id="NF001810">
    <property type="entry name" value="PRK00529.1"/>
    <property type="match status" value="1"/>
</dbReference>
<dbReference type="NCBIfam" id="NF011175">
    <property type="entry name" value="PRK14578.1"/>
    <property type="match status" value="1"/>
</dbReference>
<dbReference type="PANTHER" id="PTHR30053">
    <property type="entry name" value="ELONGATION FACTOR P"/>
    <property type="match status" value="1"/>
</dbReference>
<dbReference type="PANTHER" id="PTHR30053:SF14">
    <property type="entry name" value="TRANSLATION ELONGATION FACTOR KOW-LIKE DOMAIN-CONTAINING PROTEIN"/>
    <property type="match status" value="1"/>
</dbReference>
<dbReference type="Pfam" id="PF01132">
    <property type="entry name" value="EFP"/>
    <property type="match status" value="1"/>
</dbReference>
<dbReference type="Pfam" id="PF08207">
    <property type="entry name" value="EFP_N"/>
    <property type="match status" value="1"/>
</dbReference>
<dbReference type="Pfam" id="PF09285">
    <property type="entry name" value="Elong-fact-P_C"/>
    <property type="match status" value="1"/>
</dbReference>
<dbReference type="PIRSF" id="PIRSF005901">
    <property type="entry name" value="EF-P"/>
    <property type="match status" value="1"/>
</dbReference>
<dbReference type="SMART" id="SM01185">
    <property type="entry name" value="EFP"/>
    <property type="match status" value="1"/>
</dbReference>
<dbReference type="SMART" id="SM00841">
    <property type="entry name" value="Elong-fact-P_C"/>
    <property type="match status" value="1"/>
</dbReference>
<dbReference type="SUPFAM" id="SSF50249">
    <property type="entry name" value="Nucleic acid-binding proteins"/>
    <property type="match status" value="2"/>
</dbReference>
<dbReference type="SUPFAM" id="SSF50104">
    <property type="entry name" value="Translation proteins SH3-like domain"/>
    <property type="match status" value="1"/>
</dbReference>
<dbReference type="PROSITE" id="PS01275">
    <property type="entry name" value="EFP"/>
    <property type="match status" value="1"/>
</dbReference>
<reference key="1">
    <citation type="journal article" date="2003" name="Science">
        <title>Genome of Geobacter sulfurreducens: metal reduction in subsurface environments.</title>
        <authorList>
            <person name="Methe B.A."/>
            <person name="Nelson K.E."/>
            <person name="Eisen J.A."/>
            <person name="Paulsen I.T."/>
            <person name="Nelson W.C."/>
            <person name="Heidelberg J.F."/>
            <person name="Wu D."/>
            <person name="Wu M."/>
            <person name="Ward N.L."/>
            <person name="Beanan M.J."/>
            <person name="Dodson R.J."/>
            <person name="Madupu R."/>
            <person name="Brinkac L.M."/>
            <person name="Daugherty S.C."/>
            <person name="DeBoy R.T."/>
            <person name="Durkin A.S."/>
            <person name="Gwinn M.L."/>
            <person name="Kolonay J.F."/>
            <person name="Sullivan S.A."/>
            <person name="Haft D.H."/>
            <person name="Selengut J."/>
            <person name="Davidsen T.M."/>
            <person name="Zafar N."/>
            <person name="White O."/>
            <person name="Tran B."/>
            <person name="Romero C."/>
            <person name="Forberger H.A."/>
            <person name="Weidman J.F."/>
            <person name="Khouri H.M."/>
            <person name="Feldblyum T.V."/>
            <person name="Utterback T.R."/>
            <person name="Van Aken S.E."/>
            <person name="Lovley D.R."/>
            <person name="Fraser C.M."/>
        </authorList>
    </citation>
    <scope>NUCLEOTIDE SEQUENCE [LARGE SCALE GENOMIC DNA]</scope>
    <source>
        <strain>ATCC 51573 / DSM 12127 / PCA</strain>
    </source>
</reference>
<organism>
    <name type="scientific">Geobacter sulfurreducens (strain ATCC 51573 / DSM 12127 / PCA)</name>
    <dbReference type="NCBI Taxonomy" id="243231"/>
    <lineage>
        <taxon>Bacteria</taxon>
        <taxon>Pseudomonadati</taxon>
        <taxon>Thermodesulfobacteriota</taxon>
        <taxon>Desulfuromonadia</taxon>
        <taxon>Geobacterales</taxon>
        <taxon>Geobacteraceae</taxon>
        <taxon>Geobacter</taxon>
    </lineage>
</organism>
<keyword id="KW-0963">Cytoplasm</keyword>
<keyword id="KW-0251">Elongation factor</keyword>
<keyword id="KW-0648">Protein biosynthesis</keyword>
<keyword id="KW-1185">Reference proteome</keyword>
<proteinExistence type="inferred from homology"/>
<accession>Q74FY7</accession>
<gene>
    <name evidence="1" type="primary">efp1</name>
    <name type="synonym">efp-1</name>
    <name type="ordered locus">GSU0465</name>
</gene>
<protein>
    <recommendedName>
        <fullName evidence="1">Elongation factor P 1</fullName>
        <shortName evidence="1">EF-P 1</shortName>
    </recommendedName>
</protein>
<evidence type="ECO:0000255" key="1">
    <source>
        <dbReference type="HAMAP-Rule" id="MF_00141"/>
    </source>
</evidence>
<feature type="chain" id="PRO_0000094253" description="Elongation factor P 1">
    <location>
        <begin position="1"/>
        <end position="187"/>
    </location>
</feature>
<name>EFP1_GEOSL</name>